<accession>Q9XGY4</accession>
<keyword id="KW-0007">Acetylation</keyword>
<keyword id="KW-0143">Chaperone</keyword>
<keyword id="KW-1015">Disulfide bond</keyword>
<keyword id="KW-0479">Metal-binding</keyword>
<keyword id="KW-0496">Mitochondrion</keyword>
<keyword id="KW-0653">Protein transport</keyword>
<keyword id="KW-1185">Reference proteome</keyword>
<keyword id="KW-0811">Translocation</keyword>
<keyword id="KW-0813">Transport</keyword>
<keyword id="KW-0862">Zinc</keyword>
<reference key="1">
    <citation type="journal article" date="1999" name="FEBS Lett.">
        <title>The mitochondrial TIM22 preprotein translocase is highly conserved throughout the eukaryotic kingdom.</title>
        <authorList>
            <person name="Bauer M.F."/>
            <person name="Rothbauer U."/>
            <person name="Muehlenbein N."/>
            <person name="Smith R.J.H."/>
            <person name="Gerbitz K.-D."/>
            <person name="Neupert W."/>
            <person name="Brunner M."/>
            <person name="Hofmann S."/>
        </authorList>
    </citation>
    <scope>NUCLEOTIDE SEQUENCE [MRNA]</scope>
</reference>
<reference key="2">
    <citation type="submission" date="1999-04" db="EMBL/GenBank/DDBJ databases">
        <title>Structural analysis of Arabidopsis thaliana chromosome 5. XI.</title>
        <authorList>
            <person name="Kaneko T."/>
            <person name="Katoh T."/>
            <person name="Asamizu E."/>
            <person name="Sato S."/>
            <person name="Nakamura Y."/>
            <person name="Kotani H."/>
            <person name="Tabata S."/>
        </authorList>
    </citation>
    <scope>NUCLEOTIDE SEQUENCE [LARGE SCALE GENOMIC DNA]</scope>
    <source>
        <strain>cv. Columbia</strain>
    </source>
</reference>
<reference key="3">
    <citation type="journal article" date="2017" name="Plant J.">
        <title>Araport11: a complete reannotation of the Arabidopsis thaliana reference genome.</title>
        <authorList>
            <person name="Cheng C.Y."/>
            <person name="Krishnakumar V."/>
            <person name="Chan A.P."/>
            <person name="Thibaud-Nissen F."/>
            <person name="Schobel S."/>
            <person name="Town C.D."/>
        </authorList>
    </citation>
    <scope>GENOME REANNOTATION</scope>
    <source>
        <strain>cv. Columbia</strain>
    </source>
</reference>
<reference key="4">
    <citation type="journal article" date="2003" name="Science">
        <title>Empirical analysis of transcriptional activity in the Arabidopsis genome.</title>
        <authorList>
            <person name="Yamada K."/>
            <person name="Lim J."/>
            <person name="Dale J.M."/>
            <person name="Chen H."/>
            <person name="Shinn P."/>
            <person name="Palm C.J."/>
            <person name="Southwick A.M."/>
            <person name="Wu H.C."/>
            <person name="Kim C.J."/>
            <person name="Nguyen M."/>
            <person name="Pham P.K."/>
            <person name="Cheuk R.F."/>
            <person name="Karlin-Newmann G."/>
            <person name="Liu S.X."/>
            <person name="Lam B."/>
            <person name="Sakano H."/>
            <person name="Wu T."/>
            <person name="Yu G."/>
            <person name="Miranda M."/>
            <person name="Quach H.L."/>
            <person name="Tripp M."/>
            <person name="Chang C.H."/>
            <person name="Lee J.M."/>
            <person name="Toriumi M.J."/>
            <person name="Chan M.M."/>
            <person name="Tang C.C."/>
            <person name="Onodera C.S."/>
            <person name="Deng J.M."/>
            <person name="Akiyama K."/>
            <person name="Ansari Y."/>
            <person name="Arakawa T."/>
            <person name="Banh J."/>
            <person name="Banno F."/>
            <person name="Bowser L."/>
            <person name="Brooks S.Y."/>
            <person name="Carninci P."/>
            <person name="Chao Q."/>
            <person name="Choy N."/>
            <person name="Enju A."/>
            <person name="Goldsmith A.D."/>
            <person name="Gurjal M."/>
            <person name="Hansen N.F."/>
            <person name="Hayashizaki Y."/>
            <person name="Johnson-Hopson C."/>
            <person name="Hsuan V.W."/>
            <person name="Iida K."/>
            <person name="Karnes M."/>
            <person name="Khan S."/>
            <person name="Koesema E."/>
            <person name="Ishida J."/>
            <person name="Jiang P.X."/>
            <person name="Jones T."/>
            <person name="Kawai J."/>
            <person name="Kamiya A."/>
            <person name="Meyers C."/>
            <person name="Nakajima M."/>
            <person name="Narusaka M."/>
            <person name="Seki M."/>
            <person name="Sakurai T."/>
            <person name="Satou M."/>
            <person name="Tamse R."/>
            <person name="Vaysberg M."/>
            <person name="Wallender E.K."/>
            <person name="Wong C."/>
            <person name="Yamamura Y."/>
            <person name="Yuan S."/>
            <person name="Shinozaki K."/>
            <person name="Davis R.W."/>
            <person name="Theologis A."/>
            <person name="Ecker J.R."/>
        </authorList>
    </citation>
    <scope>NUCLEOTIDE SEQUENCE [LARGE SCALE MRNA]</scope>
    <source>
        <strain>cv. Columbia</strain>
    </source>
</reference>
<reference key="5">
    <citation type="submission" date="2002-03" db="EMBL/GenBank/DDBJ databases">
        <title>Full-length cDNA from Arabidopsis thaliana.</title>
        <authorList>
            <person name="Brover V.V."/>
            <person name="Troukhan M.E."/>
            <person name="Alexandrov N.A."/>
            <person name="Lu Y.-P."/>
            <person name="Flavell R.B."/>
            <person name="Feldmann K.A."/>
        </authorList>
    </citation>
    <scope>NUCLEOTIDE SEQUENCE [LARGE SCALE MRNA]</scope>
</reference>
<reference key="6">
    <citation type="journal article" date="2004" name="Plant Physiol.">
        <title>A transcriptomic and proteomic characterization of the Arabidopsis mitochondrial protein import apparatus and its response to mitochondrial dysfunction.</title>
        <authorList>
            <person name="Lister R."/>
            <person name="Chew O."/>
            <person name="Lee M.N."/>
            <person name="Heazlewood J.L."/>
            <person name="Clifton R."/>
            <person name="Parker K.L."/>
            <person name="Millar A.H."/>
            <person name="Whelan J."/>
        </authorList>
    </citation>
    <scope>TISSUE SPECIFICITY</scope>
    <scope>SUBCELLULAR LOCATION</scope>
    <scope>IDENTIFICATION BY MASS SPECTROMETRY</scope>
</reference>
<reference key="7">
    <citation type="journal article" date="2012" name="Mol. Cell. Proteomics">
        <title>Comparative large-scale characterisation of plant vs. mammal proteins reveals similar and idiosyncratic N-alpha acetylation features.</title>
        <authorList>
            <person name="Bienvenut W.V."/>
            <person name="Sumpton D."/>
            <person name="Martinez A."/>
            <person name="Lilla S."/>
            <person name="Espagne C."/>
            <person name="Meinnel T."/>
            <person name="Giglione C."/>
        </authorList>
    </citation>
    <scope>ACETYLATION [LARGE SCALE ANALYSIS] AT MET-1</scope>
    <scope>IDENTIFICATION BY MASS SPECTROMETRY [LARGE SCALE ANALYSIS]</scope>
</reference>
<name>TIM8_ARATH</name>
<sequence>MDPSMANNPELLQFLAQEKERAMVNEMVSKMTSVCWDKCITSAPGSKFSSSESSCLTHCAQRYMDMSMIIMKRFNSQ</sequence>
<protein>
    <recommendedName>
        <fullName>Mitochondrial import inner membrane translocase subunit TIM8</fullName>
    </recommendedName>
</protein>
<dbReference type="EMBL" id="AF150083">
    <property type="protein sequence ID" value="AAD39990.1"/>
    <property type="molecule type" value="mRNA"/>
</dbReference>
<dbReference type="EMBL" id="AB025617">
    <property type="protein sequence ID" value="BAB08904.1"/>
    <property type="molecule type" value="Genomic_DNA"/>
</dbReference>
<dbReference type="EMBL" id="CP002688">
    <property type="protein sequence ID" value="AED95995.1"/>
    <property type="molecule type" value="Genomic_DNA"/>
</dbReference>
<dbReference type="EMBL" id="BT002881">
    <property type="protein sequence ID" value="AAO22698.1"/>
    <property type="molecule type" value="mRNA"/>
</dbReference>
<dbReference type="EMBL" id="BT004405">
    <property type="protein sequence ID" value="AAO42399.1"/>
    <property type="molecule type" value="mRNA"/>
</dbReference>
<dbReference type="EMBL" id="AY087301">
    <property type="protein sequence ID" value="AAM64853.1"/>
    <property type="molecule type" value="mRNA"/>
</dbReference>
<dbReference type="RefSeq" id="NP_199894.1">
    <property type="nucleotide sequence ID" value="NM_124459.4"/>
</dbReference>
<dbReference type="SMR" id="Q9XGY4"/>
<dbReference type="BioGRID" id="20399">
    <property type="interactions" value="3"/>
</dbReference>
<dbReference type="FunCoup" id="Q9XGY4">
    <property type="interactions" value="3224"/>
</dbReference>
<dbReference type="IntAct" id="Q9XGY4">
    <property type="interactions" value="1"/>
</dbReference>
<dbReference type="STRING" id="3702.Q9XGY4"/>
<dbReference type="iPTMnet" id="Q9XGY4"/>
<dbReference type="MetOSite" id="Q9XGY4"/>
<dbReference type="PaxDb" id="3702-AT5G50810.1"/>
<dbReference type="ProteomicsDB" id="234375"/>
<dbReference type="DNASU" id="835153"/>
<dbReference type="EnsemblPlants" id="AT5G50810.1">
    <property type="protein sequence ID" value="AT5G50810.1"/>
    <property type="gene ID" value="AT5G50810"/>
</dbReference>
<dbReference type="GeneID" id="835153"/>
<dbReference type="Gramene" id="AT5G50810.1">
    <property type="protein sequence ID" value="AT5G50810.1"/>
    <property type="gene ID" value="AT5G50810"/>
</dbReference>
<dbReference type="KEGG" id="ath:AT5G50810"/>
<dbReference type="Araport" id="AT5G50810"/>
<dbReference type="TAIR" id="AT5G50810">
    <property type="gene designation" value="TIM8"/>
</dbReference>
<dbReference type="eggNOG" id="KOG3489">
    <property type="taxonomic scope" value="Eukaryota"/>
</dbReference>
<dbReference type="HOGENOM" id="CLU_141397_1_1_1"/>
<dbReference type="InParanoid" id="Q9XGY4"/>
<dbReference type="OMA" id="NEICWDK"/>
<dbReference type="OrthoDB" id="344165at2759"/>
<dbReference type="PhylomeDB" id="Q9XGY4"/>
<dbReference type="PRO" id="PR:Q9XGY4"/>
<dbReference type="Proteomes" id="UP000006548">
    <property type="component" value="Chromosome 5"/>
</dbReference>
<dbReference type="ExpressionAtlas" id="Q9XGY4">
    <property type="expression patterns" value="baseline and differential"/>
</dbReference>
<dbReference type="GO" id="GO:0005829">
    <property type="term" value="C:cytosol"/>
    <property type="evidence" value="ECO:0007005"/>
    <property type="project" value="TAIR"/>
</dbReference>
<dbReference type="GO" id="GO:0005758">
    <property type="term" value="C:mitochondrial intermembrane space"/>
    <property type="evidence" value="ECO:0007005"/>
    <property type="project" value="TAIR"/>
</dbReference>
<dbReference type="GO" id="GO:0005739">
    <property type="term" value="C:mitochondrion"/>
    <property type="evidence" value="ECO:0007005"/>
    <property type="project" value="TAIR"/>
</dbReference>
<dbReference type="GO" id="GO:0009536">
    <property type="term" value="C:plastid"/>
    <property type="evidence" value="ECO:0007005"/>
    <property type="project" value="TAIR"/>
</dbReference>
<dbReference type="GO" id="GO:0046872">
    <property type="term" value="F:metal ion binding"/>
    <property type="evidence" value="ECO:0007669"/>
    <property type="project" value="UniProtKB-KW"/>
</dbReference>
<dbReference type="GO" id="GO:0015031">
    <property type="term" value="P:protein transport"/>
    <property type="evidence" value="ECO:0007669"/>
    <property type="project" value="UniProtKB-KW"/>
</dbReference>
<dbReference type="FunFam" id="1.10.287.810:FF:000017">
    <property type="entry name" value="Mitochondrial import inner membrane translocase subunit TIM8"/>
    <property type="match status" value="1"/>
</dbReference>
<dbReference type="Gene3D" id="1.10.287.810">
    <property type="entry name" value="Mitochondrial import inner membrane translocase subunit tim13 like domains"/>
    <property type="match status" value="1"/>
</dbReference>
<dbReference type="InterPro" id="IPR004217">
    <property type="entry name" value="Tim10-like"/>
</dbReference>
<dbReference type="InterPro" id="IPR035427">
    <property type="entry name" value="Tim10-like_dom_sf"/>
</dbReference>
<dbReference type="Pfam" id="PF02953">
    <property type="entry name" value="zf-Tim10_DDP"/>
    <property type="match status" value="1"/>
</dbReference>
<dbReference type="SUPFAM" id="SSF144122">
    <property type="entry name" value="Tim10-like"/>
    <property type="match status" value="1"/>
</dbReference>
<feature type="chain" id="PRO_0000193591" description="Mitochondrial import inner membrane translocase subunit TIM8">
    <location>
        <begin position="1"/>
        <end position="77"/>
    </location>
</feature>
<feature type="short sequence motif" description="Twin CX3C motif">
    <location>
        <begin position="35"/>
        <end position="59"/>
    </location>
</feature>
<feature type="modified residue" description="N-acetylmethionine" evidence="4">
    <location>
        <position position="1"/>
    </location>
</feature>
<feature type="disulfide bond" evidence="1">
    <location>
        <begin position="35"/>
        <end position="59"/>
    </location>
</feature>
<feature type="disulfide bond" evidence="1">
    <location>
        <begin position="39"/>
        <end position="55"/>
    </location>
</feature>
<organism>
    <name type="scientific">Arabidopsis thaliana</name>
    <name type="common">Mouse-ear cress</name>
    <dbReference type="NCBI Taxonomy" id="3702"/>
    <lineage>
        <taxon>Eukaryota</taxon>
        <taxon>Viridiplantae</taxon>
        <taxon>Streptophyta</taxon>
        <taxon>Embryophyta</taxon>
        <taxon>Tracheophyta</taxon>
        <taxon>Spermatophyta</taxon>
        <taxon>Magnoliopsida</taxon>
        <taxon>eudicotyledons</taxon>
        <taxon>Gunneridae</taxon>
        <taxon>Pentapetalae</taxon>
        <taxon>rosids</taxon>
        <taxon>malvids</taxon>
        <taxon>Brassicales</taxon>
        <taxon>Brassicaceae</taxon>
        <taxon>Camelineae</taxon>
        <taxon>Arabidopsis</taxon>
    </lineage>
</organism>
<comment type="function">
    <text evidence="1">Mitochondrial intermembrane chaperone that participates in the import and insertion of some multi-pass transmembrane proteins into the mitochondrial inner membrane. Also required for the transfer of beta-barrel precursors from the TOM complex to the sorting and assembly machinery (SAM complex) of the outer membrane. Acts as a chaperone-like protein that protects the hydrophobic precursors from aggregation and guide them through the mitochondrial intermembrane space. The TIM8-TIM13 complex mediates the import of some proteins while the predominant TIM9-TIM10 70 kDa complex mediates the import of much more proteins (By similarity).</text>
</comment>
<comment type="subunit">
    <text evidence="1">Heterohexamer; composed of 3 copies of TIM8 and 3 copies of TIM13, named soluble 70 kDa complex. Associates with the TIM22 complex, whose core is composed of TIM22 (By similarity).</text>
</comment>
<comment type="subcellular location">
    <subcellularLocation>
        <location evidence="2">Mitochondrion intermembrane space</location>
    </subcellularLocation>
</comment>
<comment type="tissue specificity">
    <text evidence="2">Expressed in roots, flowers, young cotyledons and leaves.</text>
</comment>
<comment type="domain">
    <text evidence="1">The twin CX3C motif contains 4 conserved Cys residues that form 2 disulfide bonds in the mitochondrial intermembrane space. However, during the transit of TIM8 from cytoplasm into mitochondrion, the Cys residues probably coordinate zinc, thereby preventing folding and allowing its transfer across mitochondrial outer membrane (By similarity).</text>
</comment>
<comment type="similarity">
    <text evidence="3">Belongs to the small Tim family.</text>
</comment>
<evidence type="ECO:0000250" key="1"/>
<evidence type="ECO:0000269" key="2">
    <source>
    </source>
</evidence>
<evidence type="ECO:0000305" key="3"/>
<evidence type="ECO:0007744" key="4">
    <source>
    </source>
</evidence>
<proteinExistence type="evidence at protein level"/>
<gene>
    <name type="primary">TIM8</name>
    <name type="ordered locus">At5g50810</name>
    <name type="ORF">K7B16.3</name>
</gene>